<accession>Q2S232</accession>
<name>RS16_SALRD</name>
<keyword id="KW-1185">Reference proteome</keyword>
<keyword id="KW-0687">Ribonucleoprotein</keyword>
<keyword id="KW-0689">Ribosomal protein</keyword>
<feature type="chain" id="PRO_0000243866" description="Small ribosomal subunit protein bS16">
    <location>
        <begin position="1"/>
        <end position="205"/>
    </location>
</feature>
<feature type="region of interest" description="Disordered" evidence="2">
    <location>
        <begin position="110"/>
        <end position="205"/>
    </location>
</feature>
<feature type="compositionally biased region" description="Basic and acidic residues" evidence="2">
    <location>
        <begin position="123"/>
        <end position="132"/>
    </location>
</feature>
<feature type="compositionally biased region" description="Acidic residues" evidence="2">
    <location>
        <begin position="153"/>
        <end position="205"/>
    </location>
</feature>
<evidence type="ECO:0000255" key="1">
    <source>
        <dbReference type="HAMAP-Rule" id="MF_00385"/>
    </source>
</evidence>
<evidence type="ECO:0000256" key="2">
    <source>
        <dbReference type="SAM" id="MobiDB-lite"/>
    </source>
</evidence>
<evidence type="ECO:0000305" key="3"/>
<gene>
    <name evidence="1" type="primary">rpsP</name>
    <name type="ordered locus">SRU_1629</name>
</gene>
<organism>
    <name type="scientific">Salinibacter ruber (strain DSM 13855 / M31)</name>
    <dbReference type="NCBI Taxonomy" id="309807"/>
    <lineage>
        <taxon>Bacteria</taxon>
        <taxon>Pseudomonadati</taxon>
        <taxon>Rhodothermota</taxon>
        <taxon>Rhodothermia</taxon>
        <taxon>Rhodothermales</taxon>
        <taxon>Salinibacteraceae</taxon>
        <taxon>Salinibacter</taxon>
    </lineage>
</organism>
<proteinExistence type="inferred from homology"/>
<reference key="1">
    <citation type="journal article" date="2005" name="Proc. Natl. Acad. Sci. U.S.A.">
        <title>The genome of Salinibacter ruber: convergence and gene exchange among hyperhalophilic bacteria and archaea.</title>
        <authorList>
            <person name="Mongodin E.F."/>
            <person name="Nelson K.E."/>
            <person name="Daugherty S."/>
            <person name="DeBoy R.T."/>
            <person name="Wister J."/>
            <person name="Khouri H."/>
            <person name="Weidman J."/>
            <person name="Walsh D.A."/>
            <person name="Papke R.T."/>
            <person name="Sanchez Perez G."/>
            <person name="Sharma A.K."/>
            <person name="Nesbo C.L."/>
            <person name="MacLeod D."/>
            <person name="Bapteste E."/>
            <person name="Doolittle W.F."/>
            <person name="Charlebois R.L."/>
            <person name="Legault B."/>
            <person name="Rodriguez-Valera F."/>
        </authorList>
    </citation>
    <scope>NUCLEOTIDE SEQUENCE [LARGE SCALE GENOMIC DNA]</scope>
    <source>
        <strain>DSM 13855 / CECT 5946 / M31</strain>
    </source>
</reference>
<protein>
    <recommendedName>
        <fullName evidence="1">Small ribosomal subunit protein bS16</fullName>
    </recommendedName>
    <alternativeName>
        <fullName evidence="3">30S ribosomal protein S16</fullName>
    </alternativeName>
</protein>
<dbReference type="EMBL" id="CP000159">
    <property type="protein sequence ID" value="ABC45535.1"/>
    <property type="molecule type" value="Genomic_DNA"/>
</dbReference>
<dbReference type="RefSeq" id="WP_011404375.1">
    <property type="nucleotide sequence ID" value="NC_007677.1"/>
</dbReference>
<dbReference type="RefSeq" id="YP_445749.1">
    <property type="nucleotide sequence ID" value="NC_007677.1"/>
</dbReference>
<dbReference type="SMR" id="Q2S232"/>
<dbReference type="STRING" id="309807.SRU_1629"/>
<dbReference type="EnsemblBacteria" id="ABC45535">
    <property type="protein sequence ID" value="ABC45535"/>
    <property type="gene ID" value="SRU_1629"/>
</dbReference>
<dbReference type="GeneID" id="89720948"/>
<dbReference type="KEGG" id="sru:SRU_1629"/>
<dbReference type="PATRIC" id="fig|309807.25.peg.1690"/>
<dbReference type="eggNOG" id="COG0228">
    <property type="taxonomic scope" value="Bacteria"/>
</dbReference>
<dbReference type="HOGENOM" id="CLU_100590_0_0_10"/>
<dbReference type="OrthoDB" id="9807878at2"/>
<dbReference type="Proteomes" id="UP000008674">
    <property type="component" value="Chromosome"/>
</dbReference>
<dbReference type="GO" id="GO:0005737">
    <property type="term" value="C:cytoplasm"/>
    <property type="evidence" value="ECO:0007669"/>
    <property type="project" value="UniProtKB-ARBA"/>
</dbReference>
<dbReference type="GO" id="GO:0015935">
    <property type="term" value="C:small ribosomal subunit"/>
    <property type="evidence" value="ECO:0007669"/>
    <property type="project" value="TreeGrafter"/>
</dbReference>
<dbReference type="GO" id="GO:0003735">
    <property type="term" value="F:structural constituent of ribosome"/>
    <property type="evidence" value="ECO:0007669"/>
    <property type="project" value="InterPro"/>
</dbReference>
<dbReference type="GO" id="GO:0006412">
    <property type="term" value="P:translation"/>
    <property type="evidence" value="ECO:0007669"/>
    <property type="project" value="UniProtKB-UniRule"/>
</dbReference>
<dbReference type="Gene3D" id="3.30.1320.10">
    <property type="match status" value="1"/>
</dbReference>
<dbReference type="HAMAP" id="MF_00385">
    <property type="entry name" value="Ribosomal_bS16"/>
    <property type="match status" value="1"/>
</dbReference>
<dbReference type="InterPro" id="IPR000307">
    <property type="entry name" value="Ribosomal_bS16"/>
</dbReference>
<dbReference type="InterPro" id="IPR023803">
    <property type="entry name" value="Ribosomal_bS16_dom_sf"/>
</dbReference>
<dbReference type="NCBIfam" id="TIGR00002">
    <property type="entry name" value="S16"/>
    <property type="match status" value="1"/>
</dbReference>
<dbReference type="PANTHER" id="PTHR12919">
    <property type="entry name" value="30S RIBOSOMAL PROTEIN S16"/>
    <property type="match status" value="1"/>
</dbReference>
<dbReference type="PANTHER" id="PTHR12919:SF20">
    <property type="entry name" value="SMALL RIBOSOMAL SUBUNIT PROTEIN BS16M"/>
    <property type="match status" value="1"/>
</dbReference>
<dbReference type="Pfam" id="PF00886">
    <property type="entry name" value="Ribosomal_S16"/>
    <property type="match status" value="1"/>
</dbReference>
<dbReference type="SUPFAM" id="SSF54565">
    <property type="entry name" value="Ribosomal protein S16"/>
    <property type="match status" value="1"/>
</dbReference>
<comment type="similarity">
    <text evidence="1">Belongs to the bacterial ribosomal protein bS16 family.</text>
</comment>
<sequence length="205" mass="23140">MSVKLRLRRIGRKKIPVYSIVAADQRNARDGRYIEDIGRYFPLREPAEVRLEEDRALYWLENGAQPSDTVRSILRRRGLLLHHHLKKKGESPGEIESAVEEFRERMAEQGEEVKIAVGTRGQDPLERERERAEEIDEEAQLRAQATPLSAVQEETEAEEAEDVETADAEDADAASETDEPEAAADEADETDASADADDNEEPEDE</sequence>